<organism>
    <name type="scientific">Escherichia coli O45:K1 (strain S88 / ExPEC)</name>
    <dbReference type="NCBI Taxonomy" id="585035"/>
    <lineage>
        <taxon>Bacteria</taxon>
        <taxon>Pseudomonadati</taxon>
        <taxon>Pseudomonadota</taxon>
        <taxon>Gammaproteobacteria</taxon>
        <taxon>Enterobacterales</taxon>
        <taxon>Enterobacteriaceae</taxon>
        <taxon>Escherichia</taxon>
    </lineage>
</organism>
<accession>B7MBF8</accession>
<protein>
    <recommendedName>
        <fullName evidence="1">Outer membrane protein assembly factor BamA</fullName>
    </recommendedName>
</protein>
<name>BAMA_ECO45</name>
<proteinExistence type="inferred from homology"/>
<evidence type="ECO:0000255" key="1">
    <source>
        <dbReference type="HAMAP-Rule" id="MF_01430"/>
    </source>
</evidence>
<evidence type="ECO:0000255" key="2">
    <source>
        <dbReference type="PROSITE-ProRule" id="PRU01115"/>
    </source>
</evidence>
<reference key="1">
    <citation type="journal article" date="2009" name="PLoS Genet.">
        <title>Organised genome dynamics in the Escherichia coli species results in highly diverse adaptive paths.</title>
        <authorList>
            <person name="Touchon M."/>
            <person name="Hoede C."/>
            <person name="Tenaillon O."/>
            <person name="Barbe V."/>
            <person name="Baeriswyl S."/>
            <person name="Bidet P."/>
            <person name="Bingen E."/>
            <person name="Bonacorsi S."/>
            <person name="Bouchier C."/>
            <person name="Bouvet O."/>
            <person name="Calteau A."/>
            <person name="Chiapello H."/>
            <person name="Clermont O."/>
            <person name="Cruveiller S."/>
            <person name="Danchin A."/>
            <person name="Diard M."/>
            <person name="Dossat C."/>
            <person name="Karoui M.E."/>
            <person name="Frapy E."/>
            <person name="Garry L."/>
            <person name="Ghigo J.M."/>
            <person name="Gilles A.M."/>
            <person name="Johnson J."/>
            <person name="Le Bouguenec C."/>
            <person name="Lescat M."/>
            <person name="Mangenot S."/>
            <person name="Martinez-Jehanne V."/>
            <person name="Matic I."/>
            <person name="Nassif X."/>
            <person name="Oztas S."/>
            <person name="Petit M.A."/>
            <person name="Pichon C."/>
            <person name="Rouy Z."/>
            <person name="Ruf C.S."/>
            <person name="Schneider D."/>
            <person name="Tourret J."/>
            <person name="Vacherie B."/>
            <person name="Vallenet D."/>
            <person name="Medigue C."/>
            <person name="Rocha E.P.C."/>
            <person name="Denamur E."/>
        </authorList>
    </citation>
    <scope>NUCLEOTIDE SEQUENCE [LARGE SCALE GENOMIC DNA]</scope>
    <source>
        <strain>S88 / ExPEC</strain>
    </source>
</reference>
<comment type="function">
    <text evidence="1">Part of the outer membrane protein assembly complex, which is involved in assembly and insertion of beta-barrel proteins into the outer membrane. Constitutes, with BamD, the core component of the assembly machinery.</text>
</comment>
<comment type="subunit">
    <text evidence="1">Part of the Bam complex, which is composed of the outer membrane protein BamA, and four lipoproteins BamB, BamC, BamD and BamE.</text>
</comment>
<comment type="subcellular location">
    <subcellularLocation>
        <location evidence="1">Cell outer membrane</location>
    </subcellularLocation>
</comment>
<comment type="similarity">
    <text evidence="1">Belongs to the BamA family.</text>
</comment>
<dbReference type="EMBL" id="CU928161">
    <property type="protein sequence ID" value="CAR01552.1"/>
    <property type="molecule type" value="Genomic_DNA"/>
</dbReference>
<dbReference type="RefSeq" id="WP_001240896.1">
    <property type="nucleotide sequence ID" value="NC_011742.1"/>
</dbReference>
<dbReference type="EMDB" id="EMD-10247"/>
<dbReference type="EMDB" id="EMD-10248"/>
<dbReference type="EMDB" id="EMD-10249"/>
<dbReference type="EMDB" id="EMD-10250"/>
<dbReference type="EMDB" id="EMD-10251"/>
<dbReference type="EMDB" id="EMD-10252"/>
<dbReference type="EMDB" id="EMD-10253"/>
<dbReference type="EMDB" id="EMD-10254"/>
<dbReference type="EMDB" id="EMD-10255"/>
<dbReference type="EMDB" id="EMD-10268"/>
<dbReference type="EMDB" id="EMD-10269"/>
<dbReference type="EMDB" id="EMD-10270"/>
<dbReference type="EMDB" id="EMD-10271"/>
<dbReference type="EMDB" id="EMD-10272"/>
<dbReference type="EMDB" id="EMD-10274"/>
<dbReference type="EMDB" id="EMD-10275"/>
<dbReference type="EMDB" id="EMD-10276"/>
<dbReference type="SMR" id="B7MBF8"/>
<dbReference type="GeneID" id="93777248"/>
<dbReference type="KEGG" id="ecz:ECS88_0187"/>
<dbReference type="HOGENOM" id="CLU_007664_1_0_6"/>
<dbReference type="Proteomes" id="UP000000747">
    <property type="component" value="Chromosome"/>
</dbReference>
<dbReference type="GO" id="GO:1990063">
    <property type="term" value="C:Bam protein complex"/>
    <property type="evidence" value="ECO:0007669"/>
    <property type="project" value="TreeGrafter"/>
</dbReference>
<dbReference type="GO" id="GO:0043165">
    <property type="term" value="P:Gram-negative-bacterium-type cell outer membrane assembly"/>
    <property type="evidence" value="ECO:0007669"/>
    <property type="project" value="UniProtKB-UniRule"/>
</dbReference>
<dbReference type="GO" id="GO:0051205">
    <property type="term" value="P:protein insertion into membrane"/>
    <property type="evidence" value="ECO:0007669"/>
    <property type="project" value="UniProtKB-UniRule"/>
</dbReference>
<dbReference type="FunFam" id="2.40.160.50:FF:000001">
    <property type="entry name" value="Outer membrane protein assembly factor BamA"/>
    <property type="match status" value="1"/>
</dbReference>
<dbReference type="FunFam" id="3.10.20.310:FF:000001">
    <property type="entry name" value="Outer membrane protein assembly factor BamA"/>
    <property type="match status" value="1"/>
</dbReference>
<dbReference type="FunFam" id="3.10.20.310:FF:000002">
    <property type="entry name" value="Outer membrane protein assembly factor BamA"/>
    <property type="match status" value="1"/>
</dbReference>
<dbReference type="FunFam" id="3.10.20.310:FF:000003">
    <property type="entry name" value="Outer membrane protein assembly factor BamA"/>
    <property type="match status" value="1"/>
</dbReference>
<dbReference type="FunFam" id="3.10.20.310:FF:000004">
    <property type="entry name" value="Outer membrane protein assembly factor BamA"/>
    <property type="match status" value="1"/>
</dbReference>
<dbReference type="FunFam" id="3.10.20.310:FF:000005">
    <property type="entry name" value="Outer membrane protein assembly factor BamA"/>
    <property type="match status" value="1"/>
</dbReference>
<dbReference type="Gene3D" id="3.10.20.310">
    <property type="entry name" value="membrane protein fhac"/>
    <property type="match status" value="5"/>
</dbReference>
<dbReference type="Gene3D" id="2.40.160.50">
    <property type="entry name" value="membrane protein fhac: a member of the omp85/tpsb transporter family"/>
    <property type="match status" value="1"/>
</dbReference>
<dbReference type="HAMAP" id="MF_01430">
    <property type="entry name" value="OM_assembly_BamA"/>
    <property type="match status" value="1"/>
</dbReference>
<dbReference type="InterPro" id="IPR000184">
    <property type="entry name" value="Bac_surfAg_D15"/>
</dbReference>
<dbReference type="InterPro" id="IPR010827">
    <property type="entry name" value="BamA/TamA_POTRA"/>
</dbReference>
<dbReference type="InterPro" id="IPR039910">
    <property type="entry name" value="D15-like"/>
</dbReference>
<dbReference type="InterPro" id="IPR023707">
    <property type="entry name" value="OM_assembly_BamA"/>
</dbReference>
<dbReference type="InterPro" id="IPR034746">
    <property type="entry name" value="POTRA"/>
</dbReference>
<dbReference type="NCBIfam" id="TIGR03303">
    <property type="entry name" value="OM_YaeT"/>
    <property type="match status" value="1"/>
</dbReference>
<dbReference type="NCBIfam" id="NF008287">
    <property type="entry name" value="PRK11067.1"/>
    <property type="match status" value="1"/>
</dbReference>
<dbReference type="PANTHER" id="PTHR12815:SF23">
    <property type="entry name" value="OUTER MEMBRANE PROTEIN ASSEMBLY FACTOR BAMA"/>
    <property type="match status" value="1"/>
</dbReference>
<dbReference type="PANTHER" id="PTHR12815">
    <property type="entry name" value="SORTING AND ASSEMBLY MACHINERY SAMM50 PROTEIN FAMILY MEMBER"/>
    <property type="match status" value="1"/>
</dbReference>
<dbReference type="Pfam" id="PF01103">
    <property type="entry name" value="Omp85"/>
    <property type="match status" value="1"/>
</dbReference>
<dbReference type="Pfam" id="PF07244">
    <property type="entry name" value="POTRA"/>
    <property type="match status" value="4"/>
</dbReference>
<dbReference type="PIRSF" id="PIRSF006076">
    <property type="entry name" value="OM_assembly_OMP85"/>
    <property type="match status" value="1"/>
</dbReference>
<dbReference type="PROSITE" id="PS51779">
    <property type="entry name" value="POTRA"/>
    <property type="match status" value="5"/>
</dbReference>
<keyword id="KW-0998">Cell outer membrane</keyword>
<keyword id="KW-0472">Membrane</keyword>
<keyword id="KW-1185">Reference proteome</keyword>
<keyword id="KW-0677">Repeat</keyword>
<keyword id="KW-0732">Signal</keyword>
<keyword id="KW-0812">Transmembrane</keyword>
<keyword id="KW-1134">Transmembrane beta strand</keyword>
<gene>
    <name evidence="1" type="primary">bamA</name>
    <name type="synonym">yaeT</name>
    <name type="ordered locus">ECS88_0187</name>
</gene>
<feature type="signal peptide" evidence="1">
    <location>
        <begin position="1"/>
        <end position="20"/>
    </location>
</feature>
<feature type="chain" id="PRO_1000145770" description="Outer membrane protein assembly factor BamA">
    <location>
        <begin position="21"/>
        <end position="810"/>
    </location>
</feature>
<feature type="domain" description="POTRA 1" evidence="2">
    <location>
        <begin position="24"/>
        <end position="91"/>
    </location>
</feature>
<feature type="domain" description="POTRA 2" evidence="2">
    <location>
        <begin position="92"/>
        <end position="172"/>
    </location>
</feature>
<feature type="domain" description="POTRA 3" evidence="2">
    <location>
        <begin position="175"/>
        <end position="263"/>
    </location>
</feature>
<feature type="domain" description="POTRA 4" evidence="2">
    <location>
        <begin position="266"/>
        <end position="344"/>
    </location>
</feature>
<feature type="domain" description="POTRA 5" evidence="2">
    <location>
        <begin position="347"/>
        <end position="421"/>
    </location>
</feature>
<sequence>MAMKKLLIASLLFSSATVYGAEGFVVKDIHFEGLQRVAVGAALLSMPVRTGDTVNDEDISNTIRALFATGNFEDVRVLRDGDTLLVQVKERPTIASITFSGNKSVKDDMLKQNLEASGVRVGESLDRTTIADIEKGLEDFYYSVGKYSASVKAVVTPLPRNRVDLKLVFQEGVSAEIQQINIVGNHAFTTDELISHFQLRDEVPWWNVVGDRKYQKQKLAGDLETLRSYYLDRGYARFNIDSTQVSLTPDKKGIYVTVNITEGDQYKLSGVEVSGNLAGHSAEIEQLTKIEPGELYNGTKVTKMEDDIKKLLGRYGYAYPRVQSMPEINDADKTVKLRVNVDAGNRFYVRKIRFEGNDTSKDAVLRREMRQMEGAWLGSDLVDQGKERLNRLGFFETVDTDTQRVPGSPDQVDVVYKVKERNTGSFNFGIGYGTESGVSFQAGVQQDNWLGTGYAVGINGTKNDYQTYAELSVTNPYFTVDGVSLGGRLFYNDFQADDADLSDYTNKSYGTDVTLGFPINEYNSLRAGLGYVHNSLSNMQPQVAMWRYLYSMGEHPSTSDQDNSFKTDDFTFNYGWTYNKLDRGYFPTDGSRVNLTGKVTIPGSDNEYYKVTLDTATYVPIDDDHKWVVLGRTRWGYGDGLGGKEMPFYENFYAGGSSTVRGFQSNTIGPKAVYFPHQASNYDPDYDYECATQDGAKDLCKSDDAVGGNAMAVASLEFITPTPFISDKYANSVRTSFFWDMGTVWDTNWDSSQYSGYPDYSDPSNIRMSAGIALQWMSPLGPLVFSYAQPFKKYDGDKAEQFQFNIGKTW</sequence>